<evidence type="ECO:0000255" key="1"/>
<evidence type="ECO:0000255" key="2">
    <source>
        <dbReference type="PROSITE-ProRule" id="PRU00368"/>
    </source>
</evidence>
<evidence type="ECO:0000256" key="3">
    <source>
        <dbReference type="SAM" id="MobiDB-lite"/>
    </source>
</evidence>
<evidence type="ECO:0000269" key="4">
    <source>
    </source>
</evidence>
<evidence type="ECO:0000269" key="5">
    <source>
    </source>
</evidence>
<evidence type="ECO:0000269" key="6">
    <source>
    </source>
</evidence>
<evidence type="ECO:0000269" key="7">
    <source>
    </source>
</evidence>
<evidence type="ECO:0000269" key="8">
    <source>
    </source>
</evidence>
<evidence type="ECO:0000269" key="9">
    <source>
    </source>
</evidence>
<evidence type="ECO:0000269" key="10">
    <source>
    </source>
</evidence>
<evidence type="ECO:0000269" key="11">
    <source>
    </source>
</evidence>
<evidence type="ECO:0000303" key="12">
    <source>
    </source>
</evidence>
<evidence type="ECO:0000303" key="13">
    <source>
    </source>
</evidence>
<evidence type="ECO:0000303" key="14">
    <source>
    </source>
</evidence>
<evidence type="ECO:0000303" key="15">
    <source>
    </source>
</evidence>
<evidence type="ECO:0000305" key="16"/>
<evidence type="ECO:0000305" key="17">
    <source>
    </source>
</evidence>
<evidence type="ECO:0000312" key="18">
    <source>
        <dbReference type="MGI" id="MGI:3606476"/>
    </source>
</evidence>
<organism>
    <name type="scientific">Mus musculus</name>
    <name type="common">Mouse</name>
    <dbReference type="NCBI Taxonomy" id="10090"/>
    <lineage>
        <taxon>Eukaryota</taxon>
        <taxon>Metazoa</taxon>
        <taxon>Chordata</taxon>
        <taxon>Craniata</taxon>
        <taxon>Vertebrata</taxon>
        <taxon>Euteleostomi</taxon>
        <taxon>Mammalia</taxon>
        <taxon>Eutheria</taxon>
        <taxon>Euarchontoglires</taxon>
        <taxon>Glires</taxon>
        <taxon>Rodentia</taxon>
        <taxon>Myomorpha</taxon>
        <taxon>Muroidea</taxon>
        <taxon>Muridae</taxon>
        <taxon>Murinae</taxon>
        <taxon>Mus</taxon>
        <taxon>Mus</taxon>
    </lineage>
</organism>
<comment type="function">
    <text evidence="4 5 6 7 8 9 11">Iron-regulatory hormone that acts as an erythroid regulator after hemorrhage: produced by erythroblasts following blood loss and mediates suppression of hepcidin (HAMP) expression in the liver, thereby promoting increased iron absorption and mobilization from stores (PubMed:24880340, PubMed:30097509, PubMed:31800957, PubMed:34002695). Promotes lipid uptake into adipocytes and hepatocytes via transcriptional up-regulation of genes involved in fatty acid uptake (PubMed:22351773). Inhibits apoptosis and inflammatory response in cardiomyocytes via promotion of sphingosine-1-phosphate (S1P) and cAMP-dependent activation of AKT signaling (PubMed:30566056). Inhibits autophagy induced by nutrient deficiency in hepatocytes via promoting the phosphorylation of IRS1, AKT, and MTOR, and thereby subsequent activation of the AKT-MTOR signaling pathway (PubMed:24187137). Negatively regulates the differentiation of osteoblasts, potentially via sequestering BMP2, and thereby inhibits the activation of SMAD signaling (PubMed:34002695). The reduction in BMP2 signaling in osteoblasts also results in an increase in expression of the osteoclastogenesis-promoting factors TNFSF11/RANKL and SOST, thereby indirectly promotes bone resorption (PubMed:34002695).</text>
</comment>
<comment type="subunit">
    <text evidence="4 7 9 10">Homodimer; disulfide-linked (PubMed:22351773). Forms trimer, hexamers and higher molecular weight oligomers (PubMed:32602701). May form heteromeric complexes with C1QTNF2 and C1QTNF12 and, to a lesser extent, with C1QTNF5 and C1QTNF10 (PubMed:22351773). Interacts with BMP5 and BMP7; the interaction inhibits BMP-induced transcription of HAMP (PubMed:30097509). Interacts with BMP6; the interaction inhibits BMP-induced transcription of HAMP (PubMed:30097509, PubMed:31800957). Interacts with BMP2 (PubMed:31800957). Interacts with heterodimers composed of BMP2 and BMP6 in vitro, the interaction inhibits the heterodimer binding to its receptor BMPR1A /ALK3 and thereby suppresses expression of HAMP (PubMed:31800957).</text>
</comment>
<comment type="subcellular location">
    <subcellularLocation>
        <location evidence="4 6 10 11">Secreted</location>
    </subcellularLocation>
    <text evidence="10">Secreted when glycosylated at Asn-229 and Asn-281 (PubMed:32602701). Hydroxylation promotes secretion (PubMed:32602701).</text>
</comment>
<comment type="tissue specificity">
    <text evidence="4 5 6 8 11">Expressed in the soleus muscle in the leg (at protein level) (PubMed:22351773, PubMed:30566056). Found in blood (at protein level) (PubMed:22351773, PubMed:24187137). Weakly expressed in the heart (at protein level) (PubMed:22351773, PubMed:30566056). Predominantly expressed in skeletal muscle and, at much lower levels, in other tissues, including lung, eye, smooth muscle, brain and kidney (PubMed:22351773, PubMed:24187137). Within skeletal muscles, higher expression levels in soleus as compared with plantaris (PubMed:22351773). Expressed in osteoblasts, mature osteoclasts and erythroblasts (PubMed:34002695). When fasting, females tend to have higher circulating levels than males (PubMed:22351773). Obese mice tend to have lower expression and circulating levels as compared to lean animals (PubMed:22351773). Following EPO treatment, only expressed in bone marrow and spleen (PubMed:24880340).</text>
</comment>
<comment type="induction">
    <text evidence="4 5 6 8 9">Up-regulated by intracellular increase in cAMP levels, such as those elicited by forskolin and epinephrine treatments, and increase in calcium (ionomycine) (PubMed:22351773). Up-regulated by exercise in skeletal muscle (at protein level) and blood plasma (at protein level) (PubMed:22351773, PubMed:30566056). Drastically down-regulated by fasting (PubMed:22351773, PubMed:24187137). Up-regulated in skeletal muscle by refeeding; the extent of induction by refeeding may be dependent upon the muscle fiber type, being much higher in soleus than in plantaris (PubMed:22351773). Both glucose and lipid are equally potent in this induction, in the absence of any gut-derived hormones (PubMed:22351773). Induced by glucose in the blood; following 24 hours fasting (PubMed:22351773). Induced by glucose and/or amino acids in myotubes (PubMed:24187137). Highly induced within 4 hours of bleeding (PubMed:24880340). Induced by Epo in the spleen and blood (PubMed:24880340, PubMed:31800957).</text>
</comment>
<comment type="PTM">
    <text evidence="4 10">N-glycosylated; required for secretion of the mature protein.</text>
</comment>
<comment type="disruption phenotype">
    <text evidence="6 7 8 11">Mice are viable and fertile without any abnormal phenotypic features in normal conditions (PubMed:24880340, PubMed:30566056). Following hemorrhage mice show decreased hemoglobin and exhibit a delay in recovery from blood loss, rapid suppression of Hamp/hepcidin is also compromised (PubMed:24880340). Loss of Epo-induced enhancement of erythropoiesis and reduction in Epo-mediated suppression of Hamp and Bmp-target gene transcription, however there is no change in baseline HAMP expression (PubMed:30097509). Significantly reduced whole body, femur and tibia bone mass density (BMD) at 6 weeks and 5 months of age. Increases the mineralizing surface, mineral apposition rate and bone formation rates at 6 weeks of age however no differences are seen at 5 months of age (PubMed:34002695). Increase in osteoclast surface and osteoclast number in femurs of 6 week old mice and 5 month old mice (PubMed:34002695). Increase in Bmp2 levels in the serum and secreted by cultured osteoblasts resulting in activation of Bmp2-mediated signaling pathway targets such as Smad1, Smad5, Smad8, and Erk (PubMed:34002695). Stromal cells from 5 month old mice show enhanced ability to differentiate into mature mineralizing colony forming units ex vivo, this results in increased expression of Runx2, Sp7, Sost, and Tnfsf11/Rankl (PubMed:34002695). In an ischemic reperfusion injury model, there is a significance increase in the area and amount of left ventricular damage, resulting in an increase in left ventricular dysfunction and a reduced ejection fraction (PubMed:30566056). Increase in the number of apoptotic cells in the myocardium of the area at risk (PubMed:30566056). Increase in pro-inflammatory markers Tnf, Il-6 and Ccl2/Mcp-1, the macrophage marker Agre1, and the autophagy marker Lc3II/Lc3I ratio (PubMed:30566056). Decrease in phosphorylation of Akt and Creb1 and abolishes the increase of sphingosine-1-phosphate (S1P) and cAMP levels in cardiomyocytes (PubMed:30566056).</text>
</comment>
<comment type="miscellaneous">
    <text evidence="8 17">Mice with thalassemia intermedia show high levels of Erfe expression, contributing to the suppression of hepcidin and the systemic iron overload characteristic of thalassemia (Probable). May have cardiac protective functions following ischemic reperfusion injury, which are enhanced by exercise-induced expression and secretion from skeletal muscle. Erfe in the blood may act on cardiomyocytes to reduce apoptosis and macrophage inflammation following injury and therefore limit the subsequent area and amount of damage (PubMed:30566056).</text>
</comment>
<comment type="similarity">
    <text evidence="16">Belongs to the adipolin/erythroferrone family.</text>
</comment>
<comment type="sequence caution" evidence="16">
    <conflict type="frameshift">
        <sequence resource="EMBL-CDS" id="BAC26362"/>
    </conflict>
</comment>
<accession>Q6PGN1</accession>
<accession>E3VWA0</accession>
<accession>Q8CE11</accession>
<name>ERFE_MOUSE</name>
<reference key="1">
    <citation type="journal article" date="2012" name="J. Biol. Chem.">
        <title>Myonectin (CTRP15), a novel myokine that links skeletal muscle to systemic lipid homeostasis.</title>
        <authorList>
            <person name="Seldin M.M."/>
            <person name="Peterson J.M."/>
            <person name="Byerly M.S."/>
            <person name="Wei Z."/>
            <person name="Wong G.W."/>
        </authorList>
    </citation>
    <scope>NUCLEOTIDE SEQUENCE [MRNA]</scope>
    <scope>FUNCTION</scope>
    <scope>DIMERIZATION</scope>
    <scope>INTERACTION WITH C1QTNF2; C1QTNF5; C1QTNF10 AND C1QTNF12</scope>
    <scope>SUBCELLULAR LOCATION</scope>
    <scope>TISSUE SPECIFICITY</scope>
    <scope>INDUCTION BY EXERCISE; GLUCOSE AND LIPIDS</scope>
    <scope>GLYCOSYLATION</scope>
    <source>
        <strain>C57BL/6J</strain>
    </source>
</reference>
<reference key="2">
    <citation type="journal article" date="2005" name="Science">
        <title>The transcriptional landscape of the mammalian genome.</title>
        <authorList>
            <person name="Carninci P."/>
            <person name="Kasukawa T."/>
            <person name="Katayama S."/>
            <person name="Gough J."/>
            <person name="Frith M.C."/>
            <person name="Maeda N."/>
            <person name="Oyama R."/>
            <person name="Ravasi T."/>
            <person name="Lenhard B."/>
            <person name="Wells C."/>
            <person name="Kodzius R."/>
            <person name="Shimokawa K."/>
            <person name="Bajic V.B."/>
            <person name="Brenner S.E."/>
            <person name="Batalov S."/>
            <person name="Forrest A.R."/>
            <person name="Zavolan M."/>
            <person name="Davis M.J."/>
            <person name="Wilming L.G."/>
            <person name="Aidinis V."/>
            <person name="Allen J.E."/>
            <person name="Ambesi-Impiombato A."/>
            <person name="Apweiler R."/>
            <person name="Aturaliya R.N."/>
            <person name="Bailey T.L."/>
            <person name="Bansal M."/>
            <person name="Baxter L."/>
            <person name="Beisel K.W."/>
            <person name="Bersano T."/>
            <person name="Bono H."/>
            <person name="Chalk A.M."/>
            <person name="Chiu K.P."/>
            <person name="Choudhary V."/>
            <person name="Christoffels A."/>
            <person name="Clutterbuck D.R."/>
            <person name="Crowe M.L."/>
            <person name="Dalla E."/>
            <person name="Dalrymple B.P."/>
            <person name="de Bono B."/>
            <person name="Della Gatta G."/>
            <person name="di Bernardo D."/>
            <person name="Down T."/>
            <person name="Engstrom P."/>
            <person name="Fagiolini M."/>
            <person name="Faulkner G."/>
            <person name="Fletcher C.F."/>
            <person name="Fukushima T."/>
            <person name="Furuno M."/>
            <person name="Futaki S."/>
            <person name="Gariboldi M."/>
            <person name="Georgii-Hemming P."/>
            <person name="Gingeras T.R."/>
            <person name="Gojobori T."/>
            <person name="Green R.E."/>
            <person name="Gustincich S."/>
            <person name="Harbers M."/>
            <person name="Hayashi Y."/>
            <person name="Hensch T.K."/>
            <person name="Hirokawa N."/>
            <person name="Hill D."/>
            <person name="Huminiecki L."/>
            <person name="Iacono M."/>
            <person name="Ikeo K."/>
            <person name="Iwama A."/>
            <person name="Ishikawa T."/>
            <person name="Jakt M."/>
            <person name="Kanapin A."/>
            <person name="Katoh M."/>
            <person name="Kawasawa Y."/>
            <person name="Kelso J."/>
            <person name="Kitamura H."/>
            <person name="Kitano H."/>
            <person name="Kollias G."/>
            <person name="Krishnan S.P."/>
            <person name="Kruger A."/>
            <person name="Kummerfeld S.K."/>
            <person name="Kurochkin I.V."/>
            <person name="Lareau L.F."/>
            <person name="Lazarevic D."/>
            <person name="Lipovich L."/>
            <person name="Liu J."/>
            <person name="Liuni S."/>
            <person name="McWilliam S."/>
            <person name="Madan Babu M."/>
            <person name="Madera M."/>
            <person name="Marchionni L."/>
            <person name="Matsuda H."/>
            <person name="Matsuzawa S."/>
            <person name="Miki H."/>
            <person name="Mignone F."/>
            <person name="Miyake S."/>
            <person name="Morris K."/>
            <person name="Mottagui-Tabar S."/>
            <person name="Mulder N."/>
            <person name="Nakano N."/>
            <person name="Nakauchi H."/>
            <person name="Ng P."/>
            <person name="Nilsson R."/>
            <person name="Nishiguchi S."/>
            <person name="Nishikawa S."/>
            <person name="Nori F."/>
            <person name="Ohara O."/>
            <person name="Okazaki Y."/>
            <person name="Orlando V."/>
            <person name="Pang K.C."/>
            <person name="Pavan W.J."/>
            <person name="Pavesi G."/>
            <person name="Pesole G."/>
            <person name="Petrovsky N."/>
            <person name="Piazza S."/>
            <person name="Reed J."/>
            <person name="Reid J.F."/>
            <person name="Ring B.Z."/>
            <person name="Ringwald M."/>
            <person name="Rost B."/>
            <person name="Ruan Y."/>
            <person name="Salzberg S.L."/>
            <person name="Sandelin A."/>
            <person name="Schneider C."/>
            <person name="Schoenbach C."/>
            <person name="Sekiguchi K."/>
            <person name="Semple C.A."/>
            <person name="Seno S."/>
            <person name="Sessa L."/>
            <person name="Sheng Y."/>
            <person name="Shibata Y."/>
            <person name="Shimada H."/>
            <person name="Shimada K."/>
            <person name="Silva D."/>
            <person name="Sinclair B."/>
            <person name="Sperling S."/>
            <person name="Stupka E."/>
            <person name="Sugiura K."/>
            <person name="Sultana R."/>
            <person name="Takenaka Y."/>
            <person name="Taki K."/>
            <person name="Tammoja K."/>
            <person name="Tan S.L."/>
            <person name="Tang S."/>
            <person name="Taylor M.S."/>
            <person name="Tegner J."/>
            <person name="Teichmann S.A."/>
            <person name="Ueda H.R."/>
            <person name="van Nimwegen E."/>
            <person name="Verardo R."/>
            <person name="Wei C.L."/>
            <person name="Yagi K."/>
            <person name="Yamanishi H."/>
            <person name="Zabarovsky E."/>
            <person name="Zhu S."/>
            <person name="Zimmer A."/>
            <person name="Hide W."/>
            <person name="Bult C."/>
            <person name="Grimmond S.M."/>
            <person name="Teasdale R.D."/>
            <person name="Liu E.T."/>
            <person name="Brusic V."/>
            <person name="Quackenbush J."/>
            <person name="Wahlestedt C."/>
            <person name="Mattick J.S."/>
            <person name="Hume D.A."/>
            <person name="Kai C."/>
            <person name="Sasaki D."/>
            <person name="Tomaru Y."/>
            <person name="Fukuda S."/>
            <person name="Kanamori-Katayama M."/>
            <person name="Suzuki M."/>
            <person name="Aoki J."/>
            <person name="Arakawa T."/>
            <person name="Iida J."/>
            <person name="Imamura K."/>
            <person name="Itoh M."/>
            <person name="Kato T."/>
            <person name="Kawaji H."/>
            <person name="Kawagashira N."/>
            <person name="Kawashima T."/>
            <person name="Kojima M."/>
            <person name="Kondo S."/>
            <person name="Konno H."/>
            <person name="Nakano K."/>
            <person name="Ninomiya N."/>
            <person name="Nishio T."/>
            <person name="Okada M."/>
            <person name="Plessy C."/>
            <person name="Shibata K."/>
            <person name="Shiraki T."/>
            <person name="Suzuki S."/>
            <person name="Tagami M."/>
            <person name="Waki K."/>
            <person name="Watahiki A."/>
            <person name="Okamura-Oho Y."/>
            <person name="Suzuki H."/>
            <person name="Kawai J."/>
            <person name="Hayashizaki Y."/>
        </authorList>
    </citation>
    <scope>NUCLEOTIDE SEQUENCE [LARGE SCALE MRNA]</scope>
    <source>
        <strain>C57BL/6J</strain>
        <tissue>Head</tissue>
    </source>
</reference>
<reference key="3">
    <citation type="submission" date="2005-09" db="EMBL/GenBank/DDBJ databases">
        <authorList>
            <person name="Mural R.J."/>
            <person name="Adams M.D."/>
            <person name="Myers E.W."/>
            <person name="Smith H.O."/>
            <person name="Venter J.C."/>
        </authorList>
    </citation>
    <scope>NUCLEOTIDE SEQUENCE [LARGE SCALE GENOMIC DNA]</scope>
</reference>
<reference key="4">
    <citation type="journal article" date="2004" name="Genome Res.">
        <title>The status, quality, and expansion of the NIH full-length cDNA project: the Mammalian Gene Collection (MGC).</title>
        <authorList>
            <consortium name="The MGC Project Team"/>
        </authorList>
    </citation>
    <scope>NUCLEOTIDE SEQUENCE [LARGE SCALE MRNA]</scope>
    <source>
        <strain>C57BL/6J</strain>
    </source>
</reference>
<reference key="5">
    <citation type="journal article" date="2013" name="J. Biol. Chem.">
        <title>Skeletal muscle-derived myonectin activates the mammalian target of rapamycin (mTOR) pathway to suppress autophagy in liver.</title>
        <authorList>
            <person name="Seldin M.M."/>
            <person name="Lei X."/>
            <person name="Tan S.Y."/>
            <person name="Stanson K.P."/>
            <person name="Wei Z."/>
            <person name="Wong G.W."/>
        </authorList>
    </citation>
    <scope>FUNCTION</scope>
    <scope>TISSUE SPECIFICITY</scope>
    <scope>INDUCTION BY GLUCOSE AND AMINO ACIDS</scope>
</reference>
<reference key="6">
    <citation type="journal article" date="2014" name="Nat. Genet.">
        <title>Identification of erythroferrone as an erythroid regulator of iron metabolism.</title>
        <authorList>
            <person name="Kautz L."/>
            <person name="Jung G."/>
            <person name="Valore E.V."/>
            <person name="Rivella S."/>
            <person name="Nemeth E."/>
            <person name="Ganz T."/>
        </authorList>
    </citation>
    <scope>FUNCTION</scope>
    <scope>SUBCELLULAR LOCATION</scope>
    <scope>TISSUE SPECIFICITY</scope>
    <scope>INDUCTION BY EPO</scope>
    <scope>DISRUPTION PHENOTYPE</scope>
</reference>
<reference key="7">
    <citation type="journal article" date="2018" name="Blood">
        <title>Erythroferrone inhibits the induction of hepcidin by BMP6.</title>
        <authorList>
            <person name="Arezes J."/>
            <person name="Foy N."/>
            <person name="McHugh K."/>
            <person name="Sawant A."/>
            <person name="Quinkert D."/>
            <person name="Terraube V."/>
            <person name="Brinth A."/>
            <person name="Tam M."/>
            <person name="LaVallie E.R."/>
            <person name="Taylor S."/>
            <person name="Armitage A.E."/>
            <person name="Pasricha S.R."/>
            <person name="Cunningham O."/>
            <person name="Lambert M."/>
            <person name="Draper S.J."/>
            <person name="Jasuja R."/>
            <person name="Drakesmith H."/>
        </authorList>
    </citation>
    <scope>FUNCTION</scope>
    <scope>INTERACTION WITH HUMAN BMP5; BMP6 AND BMP7</scope>
    <scope>DISRUPTION PHENOTYPE</scope>
</reference>
<reference key="8">
    <citation type="journal article" date="2018" name="Circ. Res.">
        <title>Myonectin Is an Exercise-Induced Myokine That Protects the Heart From Ischemia-Reperfusion Injury.</title>
        <authorList>
            <person name="Otaka N."/>
            <person name="Shibata R."/>
            <person name="Ohashi K."/>
            <person name="Uemura Y."/>
            <person name="Kambara T."/>
            <person name="Enomoto T."/>
            <person name="Ogawa H."/>
            <person name="Ito M."/>
            <person name="Kawanishi H."/>
            <person name="Maruyama S."/>
            <person name="Joki Y."/>
            <person name="Fujikawa Y."/>
            <person name="Narita S."/>
            <person name="Unno K."/>
            <person name="Kawamoto Y."/>
            <person name="Murate T."/>
            <person name="Murohara T."/>
            <person name="Ouchi N."/>
        </authorList>
    </citation>
    <scope>FUNCTION</scope>
    <scope>TISSUE SPECIFICITY</scope>
    <scope>INDUCTION BY EXERCISE</scope>
    <scope>DISRUPTION PHENOTYPE</scope>
</reference>
<reference key="9">
    <citation type="journal article" date="2020" name="Biochemistry">
        <title>Protein Modifications Critical for Myonectin/Erythroferrone Secretion and Oligomer Assembly.</title>
        <authorList>
            <person name="Stewart A.N."/>
            <person name="Little H.C."/>
            <person name="Clark D.J."/>
            <person name="Zhang H."/>
            <person name="Wong G.W."/>
        </authorList>
    </citation>
    <scope>SUBUNIT</scope>
    <scope>SUBCELLULAR LOCATION</scope>
    <scope>GLYCOSYLATION AT ASN-229 AND ASN-281</scope>
    <scope>HYDROXYLATION AT PRO-99; PRO-101; PRO-102; PRO-104; PRO-105 AND PRO-107</scope>
    <scope>MUTAGENESIS OF CYS-142; CYS-194; ASN-229; CYS-273; CYS-278; ASN-281; ASN-292; ASN-319 AND SER-321</scope>
</reference>
<reference key="10">
    <citation type="journal article" date="2020" name="Blood">
        <title>Erythroferrone lowers hepcidin by sequestering BMP2/6 heterodimer from binding to the BMP type I receptor ALK3.</title>
        <authorList>
            <person name="Wang C.Y."/>
            <person name="Xu Y."/>
            <person name="Traeger L."/>
            <person name="Dogan D.Y."/>
            <person name="Xiao X."/>
            <person name="Steinbicker A.U."/>
            <person name="Babitt J.L."/>
        </authorList>
    </citation>
    <scope>FUNCTION</scope>
    <scope>INTERACTION WITH HUMAN BMP2 AND HUMAN BMP6</scope>
    <scope>INDUCTION BY EPO</scope>
</reference>
<reference key="11">
    <citation type="journal article" date="2021" name="Elife">
        <title>The hepcidin regulator erythroferrone is a new member of the erythropoiesis-iron-bone circuitry.</title>
        <authorList>
            <person name="Castro-Mollo M."/>
            <person name="Gera S."/>
            <person name="Ruiz-Martinez M."/>
            <person name="Feola M."/>
            <person name="Gumerova A."/>
            <person name="Planoutene M."/>
            <person name="Clementelli C."/>
            <person name="Sangkhae V."/>
            <person name="Casu C."/>
            <person name="Kim S.M."/>
            <person name="Ostland V."/>
            <person name="Han H."/>
            <person name="Nemeth E."/>
            <person name="Fleming R."/>
            <person name="Rivella S."/>
            <person name="Lizneva D."/>
            <person name="Yuen T."/>
            <person name="Zaidi M."/>
            <person name="Ginzburg Y."/>
        </authorList>
    </citation>
    <scope>FUNCTION</scope>
    <scope>SUBCELLULAR LOCATION</scope>
    <scope>TISSUE SPECIFICITY</scope>
    <scope>DISRUPTION PHENOTYPE</scope>
</reference>
<dbReference type="EMBL" id="HQ285249">
    <property type="protein sequence ID" value="ADP00570.1"/>
    <property type="molecule type" value="mRNA"/>
</dbReference>
<dbReference type="EMBL" id="AK029264">
    <property type="protein sequence ID" value="BAC26362.1"/>
    <property type="status" value="ALT_FRAME"/>
    <property type="molecule type" value="mRNA"/>
</dbReference>
<dbReference type="EMBL" id="CH466520">
    <property type="protein sequence ID" value="EDL40047.1"/>
    <property type="molecule type" value="Genomic_DNA"/>
</dbReference>
<dbReference type="EMBL" id="BC056923">
    <property type="protein sequence ID" value="AAH56923.1"/>
    <property type="molecule type" value="mRNA"/>
</dbReference>
<dbReference type="CCDS" id="CCDS48323.1"/>
<dbReference type="RefSeq" id="NP_775571.2">
    <property type="nucleotide sequence ID" value="NM_173395.2"/>
</dbReference>
<dbReference type="FunCoup" id="Q6PGN1">
    <property type="interactions" value="323"/>
</dbReference>
<dbReference type="STRING" id="10090.ENSMUSP00000084073"/>
<dbReference type="GlyCosmos" id="Q6PGN1">
    <property type="glycosylation" value="4 sites, No reported glycans"/>
</dbReference>
<dbReference type="GlyGen" id="Q6PGN1">
    <property type="glycosylation" value="8 sites"/>
</dbReference>
<dbReference type="iPTMnet" id="Q6PGN1"/>
<dbReference type="PhosphoSitePlus" id="Q6PGN1"/>
<dbReference type="PaxDb" id="10090-ENSMUSP00000084073"/>
<dbReference type="ProteomicsDB" id="275469"/>
<dbReference type="Antibodypedia" id="77392">
    <property type="antibodies" value="5 antibodies from 5 providers"/>
</dbReference>
<dbReference type="DNASU" id="227358"/>
<dbReference type="Ensembl" id="ENSMUST00000086861.12">
    <property type="protein sequence ID" value="ENSMUSP00000084073.6"/>
    <property type="gene ID" value="ENSMUSG00000047443.15"/>
</dbReference>
<dbReference type="GeneID" id="227358"/>
<dbReference type="KEGG" id="mmu:227358"/>
<dbReference type="UCSC" id="uc007caj.1">
    <property type="organism name" value="mouse"/>
</dbReference>
<dbReference type="AGR" id="MGI:3606476"/>
<dbReference type="CTD" id="151176"/>
<dbReference type="MGI" id="MGI:3606476">
    <property type="gene designation" value="Erfe"/>
</dbReference>
<dbReference type="VEuPathDB" id="HostDB:ENSMUSG00000047443"/>
<dbReference type="eggNOG" id="ENOG502RNS4">
    <property type="taxonomic scope" value="Eukaryota"/>
</dbReference>
<dbReference type="GeneTree" id="ENSGT00940000162100"/>
<dbReference type="HOGENOM" id="CLU_057344_1_1_1"/>
<dbReference type="InParanoid" id="Q6PGN1"/>
<dbReference type="OMA" id="MGQWASV"/>
<dbReference type="OrthoDB" id="6360045at2759"/>
<dbReference type="PhylomeDB" id="Q6PGN1"/>
<dbReference type="TreeFam" id="TF331282"/>
<dbReference type="BioGRID-ORCS" id="227358">
    <property type="hits" value="2 hits in 75 CRISPR screens"/>
</dbReference>
<dbReference type="PRO" id="PR:Q6PGN1"/>
<dbReference type="Proteomes" id="UP000000589">
    <property type="component" value="Chromosome 1"/>
</dbReference>
<dbReference type="RNAct" id="Q6PGN1">
    <property type="molecule type" value="protein"/>
</dbReference>
<dbReference type="Bgee" id="ENSMUSG00000047443">
    <property type="expression patterns" value="Expressed in primary oocyte and 46 other cell types or tissues"/>
</dbReference>
<dbReference type="ExpressionAtlas" id="Q6PGN1">
    <property type="expression patterns" value="baseline and differential"/>
</dbReference>
<dbReference type="GO" id="GO:0005576">
    <property type="term" value="C:extracellular region"/>
    <property type="evidence" value="ECO:0000314"/>
    <property type="project" value="UniProtKB"/>
</dbReference>
<dbReference type="GO" id="GO:0005615">
    <property type="term" value="C:extracellular space"/>
    <property type="evidence" value="ECO:0000314"/>
    <property type="project" value="UniProtKB"/>
</dbReference>
<dbReference type="GO" id="GO:0005179">
    <property type="term" value="F:hormone activity"/>
    <property type="evidence" value="ECO:0000314"/>
    <property type="project" value="UniProtKB"/>
</dbReference>
<dbReference type="GO" id="GO:0042802">
    <property type="term" value="F:identical protein binding"/>
    <property type="evidence" value="ECO:0000353"/>
    <property type="project" value="MGI"/>
</dbReference>
<dbReference type="GO" id="GO:0140313">
    <property type="term" value="F:molecular sequestering activity"/>
    <property type="evidence" value="ECO:0007669"/>
    <property type="project" value="Ensembl"/>
</dbReference>
<dbReference type="GO" id="GO:0051649">
    <property type="term" value="P:establishment of localization in cell"/>
    <property type="evidence" value="ECO:0000314"/>
    <property type="project" value="MGI"/>
</dbReference>
<dbReference type="GO" id="GO:0015908">
    <property type="term" value="P:fatty acid transport"/>
    <property type="evidence" value="ECO:0000314"/>
    <property type="project" value="MGI"/>
</dbReference>
<dbReference type="GO" id="GO:0006879">
    <property type="term" value="P:intracellular iron ion homeostasis"/>
    <property type="evidence" value="ECO:0000315"/>
    <property type="project" value="UniProtKB"/>
</dbReference>
<dbReference type="GO" id="GO:0043066">
    <property type="term" value="P:negative regulation of apoptotic process"/>
    <property type="evidence" value="ECO:0000315"/>
    <property type="project" value="UniProtKB"/>
</dbReference>
<dbReference type="GO" id="GO:0010507">
    <property type="term" value="P:negative regulation of autophagy"/>
    <property type="evidence" value="ECO:0000315"/>
    <property type="project" value="UniProtKB"/>
</dbReference>
<dbReference type="GO" id="GO:0030514">
    <property type="term" value="P:negative regulation of BMP signaling pathway"/>
    <property type="evidence" value="ECO:0007669"/>
    <property type="project" value="Ensembl"/>
</dbReference>
<dbReference type="GO" id="GO:0045668">
    <property type="term" value="P:negative regulation of osteoblast differentiation"/>
    <property type="evidence" value="ECO:0000315"/>
    <property type="project" value="UniProtKB"/>
</dbReference>
<dbReference type="GO" id="GO:0045671">
    <property type="term" value="P:negative regulation of osteoclast differentiation"/>
    <property type="evidence" value="ECO:0000315"/>
    <property type="project" value="UniProtKB"/>
</dbReference>
<dbReference type="GO" id="GO:2000193">
    <property type="term" value="P:positive regulation of fatty acid transport"/>
    <property type="evidence" value="ECO:0000314"/>
    <property type="project" value="MGI"/>
</dbReference>
<dbReference type="GO" id="GO:0051897">
    <property type="term" value="P:positive regulation of phosphatidylinositol 3-kinase/protein kinase B signal transduction"/>
    <property type="evidence" value="ECO:0000315"/>
    <property type="project" value="UniProtKB"/>
</dbReference>
<dbReference type="GO" id="GO:0019217">
    <property type="term" value="P:regulation of fatty acid metabolic process"/>
    <property type="evidence" value="ECO:0000314"/>
    <property type="project" value="MGI"/>
</dbReference>
<dbReference type="FunFam" id="2.60.120.40:FF:000024">
    <property type="entry name" value="erythroferrone isoform X2"/>
    <property type="match status" value="1"/>
</dbReference>
<dbReference type="Gene3D" id="2.60.120.40">
    <property type="match status" value="1"/>
</dbReference>
<dbReference type="InterPro" id="IPR052136">
    <property type="entry name" value="Adipolin/Erythroferrone-rel"/>
</dbReference>
<dbReference type="InterPro" id="IPR001073">
    <property type="entry name" value="C1q_dom"/>
</dbReference>
<dbReference type="InterPro" id="IPR008983">
    <property type="entry name" value="Tumour_necrosis_fac-like_dom"/>
</dbReference>
<dbReference type="PANTHER" id="PTHR24019">
    <property type="entry name" value="ADIPOLIN"/>
    <property type="match status" value="1"/>
</dbReference>
<dbReference type="PANTHER" id="PTHR24019:SF11">
    <property type="entry name" value="ERYTHROFERRONE"/>
    <property type="match status" value="1"/>
</dbReference>
<dbReference type="SUPFAM" id="SSF49842">
    <property type="entry name" value="TNF-like"/>
    <property type="match status" value="1"/>
</dbReference>
<dbReference type="PROSITE" id="PS50871">
    <property type="entry name" value="C1Q"/>
    <property type="match status" value="1"/>
</dbReference>
<feature type="signal peptide" evidence="1">
    <location>
        <begin position="1"/>
        <end position="24"/>
    </location>
</feature>
<feature type="chain" id="PRO_0000340251" description="Erythroferrone">
    <location>
        <begin position="25"/>
        <end position="340"/>
    </location>
</feature>
<feature type="domain" description="C1q" evidence="2">
    <location>
        <begin position="185"/>
        <end position="340"/>
    </location>
</feature>
<feature type="region of interest" description="Disordered" evidence="3">
    <location>
        <begin position="30"/>
        <end position="63"/>
    </location>
</feature>
<feature type="region of interest" description="Disordered" evidence="3">
    <location>
        <begin position="79"/>
        <end position="112"/>
    </location>
</feature>
<feature type="region of interest" description="Disordered" evidence="3">
    <location>
        <begin position="141"/>
        <end position="161"/>
    </location>
</feature>
<feature type="compositionally biased region" description="Pro residues" evidence="3">
    <location>
        <begin position="40"/>
        <end position="58"/>
    </location>
</feature>
<feature type="compositionally biased region" description="Basic residues" evidence="3">
    <location>
        <begin position="84"/>
        <end position="95"/>
    </location>
</feature>
<feature type="compositionally biased region" description="Pro residues" evidence="3">
    <location>
        <begin position="99"/>
        <end position="112"/>
    </location>
</feature>
<feature type="compositionally biased region" description="Polar residues" evidence="3">
    <location>
        <begin position="145"/>
        <end position="154"/>
    </location>
</feature>
<feature type="site" description="Required for correct protein folding in the endoplasmic reticulum" evidence="10">
    <location>
        <position position="319"/>
    </location>
</feature>
<feature type="modified residue" description="Hydroxyproline" evidence="10">
    <location>
        <position position="99"/>
    </location>
</feature>
<feature type="modified residue" description="Hydroxyproline" evidence="10">
    <location>
        <position position="101"/>
    </location>
</feature>
<feature type="modified residue" description="Hydroxyproline" evidence="10">
    <location>
        <position position="102"/>
    </location>
</feature>
<feature type="modified residue" description="Hydroxyproline" evidence="10">
    <location>
        <position position="104"/>
    </location>
</feature>
<feature type="modified residue" description="Hydroxyproline" evidence="10">
    <location>
        <position position="105"/>
    </location>
</feature>
<feature type="modified residue" description="Hydroxyproline" evidence="10">
    <location>
        <position position="107"/>
    </location>
</feature>
<feature type="glycosylation site" description="N-linked (GlcNAc...) asparagine" evidence="1 10">
    <location>
        <position position="229"/>
    </location>
</feature>
<feature type="glycosylation site" description="N-linked (GlcNAc...) asparagine" evidence="1 10">
    <location>
        <position position="281"/>
    </location>
</feature>
<feature type="glycosylation site" description="N-linked (GlcNAc...) asparagine" evidence="1">
    <location>
        <position position="292"/>
    </location>
</feature>
<feature type="glycosylation site" description="N-linked (GlcNAc...) asparagine" evidence="1">
    <location>
        <position position="319"/>
    </location>
</feature>
<feature type="mutagenesis site" description="Enhances secretion and favors trimer formation." evidence="10">
    <original>C</original>
    <variation>A</variation>
    <location>
        <position position="142"/>
    </location>
</feature>
<feature type="mutagenesis site" description="Enhances secretion and reduces the formation of higher molecular weight oligomers." evidence="10">
    <original>C</original>
    <variation>A</variation>
    <location>
        <position position="194"/>
    </location>
</feature>
<feature type="mutagenesis site" description="Abolishes glycosylation. Abolishes secretion; when associated with Q-281." evidence="10">
    <original>N</original>
    <variation>Q</variation>
    <location>
        <position position="229"/>
    </location>
</feature>
<feature type="mutagenesis site" description="Abolishes secretion." evidence="10">
    <original>C</original>
    <variation>A</variation>
    <location>
        <position position="273"/>
    </location>
</feature>
<feature type="mutagenesis site" description="Abolishes secretion." evidence="10">
    <original>C</original>
    <variation>A</variation>
    <location>
        <position position="278"/>
    </location>
</feature>
<feature type="mutagenesis site" description="Abolishes glycosylation. Abolishes secretion; when associated with Q-229." evidence="10">
    <original>N</original>
    <variation>Q</variation>
    <location>
        <position position="281"/>
    </location>
</feature>
<feature type="mutagenesis site" description="No effect on secretion." evidence="10">
    <original>N</original>
    <variation>Q</variation>
    <location>
        <position position="292"/>
    </location>
</feature>
<feature type="mutagenesis site" description="Abolishes secretion as a result of protein misfolding, protein is retained in the endoplasmic reticulum." evidence="10">
    <original>N</original>
    <variation>Q</variation>
    <location>
        <position position="319"/>
    </location>
</feature>
<feature type="mutagenesis site" description="No effect on secretion or protein folding." evidence="10">
    <original>S</original>
    <variation>Q</variation>
    <location>
        <position position="321"/>
    </location>
</feature>
<feature type="sequence conflict" description="In Ref. 2; BAC26362." evidence="16" ref="2">
    <original>T</original>
    <variation>M</variation>
    <location>
        <position position="36"/>
    </location>
</feature>
<protein>
    <recommendedName>
        <fullName evidence="18">Erythroferrone</fullName>
    </recommendedName>
    <alternativeName>
        <fullName>Complement C1q tumor necrosis factor-related protein 15</fullName>
    </alternativeName>
    <alternativeName>
        <fullName evidence="12 13 15">Myonectin</fullName>
    </alternativeName>
</protein>
<keyword id="KW-1015">Disulfide bond</keyword>
<keyword id="KW-0325">Glycoprotein</keyword>
<keyword id="KW-0372">Hormone</keyword>
<keyword id="KW-0379">Hydroxylation</keyword>
<keyword id="KW-1185">Reference proteome</keyword>
<keyword id="KW-0964">Secreted</keyword>
<keyword id="KW-0732">Signal</keyword>
<gene>
    <name evidence="18" type="primary">Erfe</name>
    <name type="synonym">C1qtnf15</name>
    <name evidence="12 13" type="synonym">Ctrp15</name>
    <name evidence="14" type="synonym">Fam132b</name>
</gene>
<proteinExistence type="evidence at protein level"/>
<sequence>MASTRRPVGARTLLACASLLAAMGLGVPESAEPVGTHARPQPPGAELPAPPANSPPEPTIAHAHSVDPRDAWMLFVKQSDKGINSKRRSKARRLKLGLPGPPGPPGPQGPPGPFIPSEVLLKEFQLLLKGAVRQRESHLEHCTRDLTTPASGSPSRVPAAQELDSQDPGALLALLAATLAQGPRAPRVEAAFHCRLRRDVQVDRRALHELGIYYLPEVEGAFHRGPGLNLTSGQYTAPVAGFYALAATLHVALTEQPRKGPTRPRDRLRLLICIQSLCQHNASLETVMGLENSSELFTISVNGVLYLQAGHYTSVFLDNASGSSLTVRSGSHFSAILLGL</sequence>